<feature type="chain" id="PRO_0000373878" description="Protein yippee-like 3">
    <location>
        <begin position="1"/>
        <end position="119"/>
    </location>
</feature>
<feature type="domain" description="Yippee" evidence="2">
    <location>
        <begin position="19"/>
        <end position="116"/>
    </location>
</feature>
<feature type="binding site" evidence="2">
    <location>
        <position position="23"/>
    </location>
    <ligand>
        <name>Zn(2+)</name>
        <dbReference type="ChEBI" id="CHEBI:29105"/>
    </ligand>
</feature>
<feature type="binding site" evidence="2">
    <location>
        <position position="26"/>
    </location>
    <ligand>
        <name>Zn(2+)</name>
        <dbReference type="ChEBI" id="CHEBI:29105"/>
    </ligand>
</feature>
<feature type="binding site" evidence="2">
    <location>
        <position position="79"/>
    </location>
    <ligand>
        <name>Zn(2+)</name>
        <dbReference type="ChEBI" id="CHEBI:29105"/>
    </ligand>
</feature>
<feature type="binding site" evidence="2">
    <location>
        <position position="82"/>
    </location>
    <ligand>
        <name>Zn(2+)</name>
        <dbReference type="ChEBI" id="CHEBI:29105"/>
    </ligand>
</feature>
<accession>Q6NWI4</accession>
<name>YPEL3_DANRE</name>
<protein>
    <recommendedName>
        <fullName>Protein yippee-like 3</fullName>
    </recommendedName>
</protein>
<dbReference type="EMBL" id="AY185349">
    <property type="protein sequence ID" value="AAO64479.1"/>
    <property type="molecule type" value="mRNA"/>
</dbReference>
<dbReference type="EMBL" id="BC067578">
    <property type="protein sequence ID" value="AAH67578.1"/>
    <property type="molecule type" value="mRNA"/>
</dbReference>
<dbReference type="EMBL" id="BC154300">
    <property type="protein sequence ID" value="AAI54301.1"/>
    <property type="molecule type" value="mRNA"/>
</dbReference>
<dbReference type="RefSeq" id="NP_997955.1">
    <property type="nucleotide sequence ID" value="NM_212790.1"/>
</dbReference>
<dbReference type="SMR" id="Q6NWI4"/>
<dbReference type="FunCoup" id="Q6NWI4">
    <property type="interactions" value="616"/>
</dbReference>
<dbReference type="STRING" id="7955.ENSDARP00000099958"/>
<dbReference type="PaxDb" id="7955-ENSDARP00000099958"/>
<dbReference type="Ensembl" id="ENSDART00000113843">
    <property type="protein sequence ID" value="ENSDARP00000099958"/>
    <property type="gene ID" value="ENSDARG00000055510"/>
</dbReference>
<dbReference type="Ensembl" id="ENSDART00000136001">
    <property type="protein sequence ID" value="ENSDARP00000113056"/>
    <property type="gene ID" value="ENSDARG00000055510"/>
</dbReference>
<dbReference type="GeneID" id="368214"/>
<dbReference type="KEGG" id="dre:368214"/>
<dbReference type="AGR" id="ZFIN:ZDB-GENE-030516-4"/>
<dbReference type="CTD" id="83719"/>
<dbReference type="ZFIN" id="ZDB-GENE-030516-4">
    <property type="gene designation" value="ypel3"/>
</dbReference>
<dbReference type="eggNOG" id="KOG3399">
    <property type="taxonomic scope" value="Eukaryota"/>
</dbReference>
<dbReference type="HOGENOM" id="CLU_043857_5_2_1"/>
<dbReference type="InParanoid" id="Q6NWI4"/>
<dbReference type="OMA" id="CADCRQV"/>
<dbReference type="OrthoDB" id="6407410at2759"/>
<dbReference type="PhylomeDB" id="Q6NWI4"/>
<dbReference type="TreeFam" id="TF313936"/>
<dbReference type="PRO" id="PR:Q6NWI4"/>
<dbReference type="Proteomes" id="UP000000437">
    <property type="component" value="Chromosome 3"/>
</dbReference>
<dbReference type="Bgee" id="ENSDARG00000055510">
    <property type="expression patterns" value="Expressed in mature ovarian follicle and 33 other cell types or tissues"/>
</dbReference>
<dbReference type="GO" id="GO:0005730">
    <property type="term" value="C:nucleolus"/>
    <property type="evidence" value="ECO:0007669"/>
    <property type="project" value="UniProtKB-SubCell"/>
</dbReference>
<dbReference type="GO" id="GO:0046872">
    <property type="term" value="F:metal ion binding"/>
    <property type="evidence" value="ECO:0007669"/>
    <property type="project" value="UniProtKB-KW"/>
</dbReference>
<dbReference type="GO" id="GO:0006915">
    <property type="term" value="P:apoptotic process"/>
    <property type="evidence" value="ECO:0007669"/>
    <property type="project" value="UniProtKB-KW"/>
</dbReference>
<dbReference type="GO" id="GO:0007420">
    <property type="term" value="P:brain development"/>
    <property type="evidence" value="ECO:0000315"/>
    <property type="project" value="ZFIN"/>
</dbReference>
<dbReference type="GO" id="GO:0046847">
    <property type="term" value="P:filopodium assembly"/>
    <property type="evidence" value="ECO:0000315"/>
    <property type="project" value="ZFIN"/>
</dbReference>
<dbReference type="GO" id="GO:0014044">
    <property type="term" value="P:Schwann cell development"/>
    <property type="evidence" value="ECO:0000315"/>
    <property type="project" value="ZFIN"/>
</dbReference>
<dbReference type="GO" id="GO:0021529">
    <property type="term" value="P:spinal cord oligodendrocyte cell differentiation"/>
    <property type="evidence" value="ECO:0000315"/>
    <property type="project" value="ZFIN"/>
</dbReference>
<dbReference type="InterPro" id="IPR034751">
    <property type="entry name" value="Yippee"/>
</dbReference>
<dbReference type="InterPro" id="IPR004910">
    <property type="entry name" value="Yippee/Mis18/Cereblon"/>
</dbReference>
<dbReference type="InterPro" id="IPR039058">
    <property type="entry name" value="Yippee_fam"/>
</dbReference>
<dbReference type="PANTHER" id="PTHR13848">
    <property type="entry name" value="PROTEIN YIPPEE-LIKE CG15309-RELATED"/>
    <property type="match status" value="1"/>
</dbReference>
<dbReference type="Pfam" id="PF03226">
    <property type="entry name" value="Yippee-Mis18"/>
    <property type="match status" value="1"/>
</dbReference>
<dbReference type="PROSITE" id="PS51792">
    <property type="entry name" value="YIPPEE"/>
    <property type="match status" value="1"/>
</dbReference>
<sequence length="119" mass="13615">MVKQTKAKTFQAYLDSCHRRYSCVHCRAHLANHDDLISKSFQGSQGRAYLFNSVVNVGCGPAEERLLLTGLHAVADIYCENCHTTLGWKYEQAFELSQKYKEGKFIIELSHMIKDNGWD</sequence>
<keyword id="KW-0053">Apoptosis</keyword>
<keyword id="KW-0479">Metal-binding</keyword>
<keyword id="KW-0539">Nucleus</keyword>
<keyword id="KW-1185">Reference proteome</keyword>
<keyword id="KW-0862">Zinc</keyword>
<evidence type="ECO:0000250" key="1"/>
<evidence type="ECO:0000255" key="2">
    <source>
        <dbReference type="PROSITE-ProRule" id="PRU01128"/>
    </source>
</evidence>
<evidence type="ECO:0000305" key="3"/>
<reference key="1">
    <citation type="submission" date="2002-11" db="EMBL/GenBank/DDBJ databases">
        <title>Cloning and expression of Ypel1 from zebrafish.</title>
        <authorList>
            <person name="Jaeger S."/>
            <person name="Meyer C."/>
            <person name="Maity S."/>
            <person name="Esguerra C.V."/>
            <person name="Behn-Krappa A."/>
            <person name="Haardt M."/>
        </authorList>
    </citation>
    <scope>NUCLEOTIDE SEQUENCE [MRNA]</scope>
</reference>
<reference key="2">
    <citation type="submission" date="2004-03" db="EMBL/GenBank/DDBJ databases">
        <authorList>
            <consortium name="NIH - Zebrafish Gene Collection (ZGC) project"/>
        </authorList>
    </citation>
    <scope>NUCLEOTIDE SEQUENCE [LARGE SCALE MRNA]</scope>
    <source>
        <tissue>Kidney</tissue>
    </source>
</reference>
<comment type="function">
    <text evidence="1">May be involved in proliferation and apoptosis in myeloid precursor cells.</text>
</comment>
<comment type="subcellular location">
    <subcellularLocation>
        <location evidence="1">Nucleus</location>
        <location evidence="1">Nucleolus</location>
    </subcellularLocation>
</comment>
<comment type="similarity">
    <text evidence="3">Belongs to the yippee family.</text>
</comment>
<gene>
    <name type="primary">ypel3</name>
    <name type="synonym">ypel1</name>
</gene>
<proteinExistence type="inferred from homology"/>
<organism>
    <name type="scientific">Danio rerio</name>
    <name type="common">Zebrafish</name>
    <name type="synonym">Brachydanio rerio</name>
    <dbReference type="NCBI Taxonomy" id="7955"/>
    <lineage>
        <taxon>Eukaryota</taxon>
        <taxon>Metazoa</taxon>
        <taxon>Chordata</taxon>
        <taxon>Craniata</taxon>
        <taxon>Vertebrata</taxon>
        <taxon>Euteleostomi</taxon>
        <taxon>Actinopterygii</taxon>
        <taxon>Neopterygii</taxon>
        <taxon>Teleostei</taxon>
        <taxon>Ostariophysi</taxon>
        <taxon>Cypriniformes</taxon>
        <taxon>Danionidae</taxon>
        <taxon>Danioninae</taxon>
        <taxon>Danio</taxon>
    </lineage>
</organism>